<protein>
    <recommendedName>
        <fullName evidence="1">Ribonuclease HII</fullName>
        <shortName evidence="1">RNase HII</shortName>
        <ecNumber evidence="1">3.1.26.4</ecNumber>
    </recommendedName>
</protein>
<gene>
    <name evidence="1" type="primary">rnhB</name>
    <name type="ordered locus">Sputw3181_2741</name>
</gene>
<evidence type="ECO:0000255" key="1">
    <source>
        <dbReference type="HAMAP-Rule" id="MF_00052"/>
    </source>
</evidence>
<evidence type="ECO:0000255" key="2">
    <source>
        <dbReference type="PROSITE-ProRule" id="PRU01319"/>
    </source>
</evidence>
<organism>
    <name type="scientific">Shewanella sp. (strain W3-18-1)</name>
    <dbReference type="NCBI Taxonomy" id="351745"/>
    <lineage>
        <taxon>Bacteria</taxon>
        <taxon>Pseudomonadati</taxon>
        <taxon>Pseudomonadota</taxon>
        <taxon>Gammaproteobacteria</taxon>
        <taxon>Alteromonadales</taxon>
        <taxon>Shewanellaceae</taxon>
        <taxon>Shewanella</taxon>
    </lineage>
</organism>
<proteinExistence type="inferred from homology"/>
<dbReference type="EC" id="3.1.26.4" evidence="1"/>
<dbReference type="EMBL" id="CP000503">
    <property type="protein sequence ID" value="ABM25558.1"/>
    <property type="molecule type" value="Genomic_DNA"/>
</dbReference>
<dbReference type="RefSeq" id="WP_011790014.1">
    <property type="nucleotide sequence ID" value="NC_008750.1"/>
</dbReference>
<dbReference type="SMR" id="A1RLL3"/>
<dbReference type="KEGG" id="shw:Sputw3181_2741"/>
<dbReference type="HOGENOM" id="CLU_036532_3_2_6"/>
<dbReference type="Proteomes" id="UP000002597">
    <property type="component" value="Chromosome"/>
</dbReference>
<dbReference type="GO" id="GO:0005737">
    <property type="term" value="C:cytoplasm"/>
    <property type="evidence" value="ECO:0007669"/>
    <property type="project" value="UniProtKB-SubCell"/>
</dbReference>
<dbReference type="GO" id="GO:0032299">
    <property type="term" value="C:ribonuclease H2 complex"/>
    <property type="evidence" value="ECO:0007669"/>
    <property type="project" value="TreeGrafter"/>
</dbReference>
<dbReference type="GO" id="GO:0030145">
    <property type="term" value="F:manganese ion binding"/>
    <property type="evidence" value="ECO:0007669"/>
    <property type="project" value="UniProtKB-UniRule"/>
</dbReference>
<dbReference type="GO" id="GO:0003723">
    <property type="term" value="F:RNA binding"/>
    <property type="evidence" value="ECO:0007669"/>
    <property type="project" value="InterPro"/>
</dbReference>
<dbReference type="GO" id="GO:0004523">
    <property type="term" value="F:RNA-DNA hybrid ribonuclease activity"/>
    <property type="evidence" value="ECO:0007669"/>
    <property type="project" value="UniProtKB-UniRule"/>
</dbReference>
<dbReference type="GO" id="GO:0043137">
    <property type="term" value="P:DNA replication, removal of RNA primer"/>
    <property type="evidence" value="ECO:0007669"/>
    <property type="project" value="TreeGrafter"/>
</dbReference>
<dbReference type="GO" id="GO:0006298">
    <property type="term" value="P:mismatch repair"/>
    <property type="evidence" value="ECO:0007669"/>
    <property type="project" value="TreeGrafter"/>
</dbReference>
<dbReference type="CDD" id="cd07182">
    <property type="entry name" value="RNase_HII_bacteria_HII_like"/>
    <property type="match status" value="1"/>
</dbReference>
<dbReference type="FunFam" id="3.30.420.10:FF:000006">
    <property type="entry name" value="Ribonuclease HII"/>
    <property type="match status" value="1"/>
</dbReference>
<dbReference type="Gene3D" id="3.30.420.10">
    <property type="entry name" value="Ribonuclease H-like superfamily/Ribonuclease H"/>
    <property type="match status" value="1"/>
</dbReference>
<dbReference type="HAMAP" id="MF_00052_B">
    <property type="entry name" value="RNase_HII_B"/>
    <property type="match status" value="1"/>
</dbReference>
<dbReference type="InterPro" id="IPR022898">
    <property type="entry name" value="RNase_HII"/>
</dbReference>
<dbReference type="InterPro" id="IPR001352">
    <property type="entry name" value="RNase_HII/HIII"/>
</dbReference>
<dbReference type="InterPro" id="IPR024567">
    <property type="entry name" value="RNase_HII/HIII_dom"/>
</dbReference>
<dbReference type="InterPro" id="IPR012337">
    <property type="entry name" value="RNaseH-like_sf"/>
</dbReference>
<dbReference type="InterPro" id="IPR036397">
    <property type="entry name" value="RNaseH_sf"/>
</dbReference>
<dbReference type="NCBIfam" id="NF000594">
    <property type="entry name" value="PRK00015.1-1"/>
    <property type="match status" value="1"/>
</dbReference>
<dbReference type="NCBIfam" id="NF000595">
    <property type="entry name" value="PRK00015.1-3"/>
    <property type="match status" value="1"/>
</dbReference>
<dbReference type="NCBIfam" id="NF000596">
    <property type="entry name" value="PRK00015.1-4"/>
    <property type="match status" value="1"/>
</dbReference>
<dbReference type="PANTHER" id="PTHR10954">
    <property type="entry name" value="RIBONUCLEASE H2 SUBUNIT A"/>
    <property type="match status" value="1"/>
</dbReference>
<dbReference type="PANTHER" id="PTHR10954:SF18">
    <property type="entry name" value="RIBONUCLEASE HII"/>
    <property type="match status" value="1"/>
</dbReference>
<dbReference type="Pfam" id="PF01351">
    <property type="entry name" value="RNase_HII"/>
    <property type="match status" value="1"/>
</dbReference>
<dbReference type="SUPFAM" id="SSF53098">
    <property type="entry name" value="Ribonuclease H-like"/>
    <property type="match status" value="1"/>
</dbReference>
<dbReference type="PROSITE" id="PS51975">
    <property type="entry name" value="RNASE_H_2"/>
    <property type="match status" value="1"/>
</dbReference>
<comment type="function">
    <text evidence="1">Endonuclease that specifically degrades the RNA of RNA-DNA hybrids.</text>
</comment>
<comment type="catalytic activity">
    <reaction evidence="1">
        <text>Endonucleolytic cleavage to 5'-phosphomonoester.</text>
        <dbReference type="EC" id="3.1.26.4"/>
    </reaction>
</comment>
<comment type="cofactor">
    <cofactor evidence="1">
        <name>Mn(2+)</name>
        <dbReference type="ChEBI" id="CHEBI:29035"/>
    </cofactor>
    <cofactor evidence="1">
        <name>Mg(2+)</name>
        <dbReference type="ChEBI" id="CHEBI:18420"/>
    </cofactor>
    <text evidence="1">Manganese or magnesium. Binds 1 divalent metal ion per monomer in the absence of substrate. May bind a second metal ion after substrate binding.</text>
</comment>
<comment type="subcellular location">
    <subcellularLocation>
        <location evidence="1">Cytoplasm</location>
    </subcellularLocation>
</comment>
<comment type="similarity">
    <text evidence="1">Belongs to the RNase HII family.</text>
</comment>
<sequence length="209" mass="22497">MAVFKVLTPADIVAFSTGLIAGVDEVGRGPLVGDVVTAAVILDPNQPISGLNDSKKLSEKRREALFDEICEKALCYHIGRASPAEIDELNILHATMLAMQRAVAGLNLAPKLVLVDGNRSPFFSHNSQSIVSHSIIKGDGLIASISAASIIAKVTRDREMDALDAAYPQYGFAKHKGYPTKAHFEAIAEHGVFDQYRKSFKPVKALLEG</sequence>
<name>RNH2_SHESW</name>
<accession>A1RLL3</accession>
<reference key="1">
    <citation type="submission" date="2006-12" db="EMBL/GenBank/DDBJ databases">
        <title>Complete sequence of Shewanella sp. W3-18-1.</title>
        <authorList>
            <consortium name="US DOE Joint Genome Institute"/>
            <person name="Copeland A."/>
            <person name="Lucas S."/>
            <person name="Lapidus A."/>
            <person name="Barry K."/>
            <person name="Detter J.C."/>
            <person name="Glavina del Rio T."/>
            <person name="Hammon N."/>
            <person name="Israni S."/>
            <person name="Dalin E."/>
            <person name="Tice H."/>
            <person name="Pitluck S."/>
            <person name="Chain P."/>
            <person name="Malfatti S."/>
            <person name="Shin M."/>
            <person name="Vergez L."/>
            <person name="Schmutz J."/>
            <person name="Larimer F."/>
            <person name="Land M."/>
            <person name="Hauser L."/>
            <person name="Kyrpides N."/>
            <person name="Lykidis A."/>
            <person name="Tiedje J."/>
            <person name="Richardson P."/>
        </authorList>
    </citation>
    <scope>NUCLEOTIDE SEQUENCE [LARGE SCALE GENOMIC DNA]</scope>
    <source>
        <strain>W3-18-1</strain>
    </source>
</reference>
<keyword id="KW-0963">Cytoplasm</keyword>
<keyword id="KW-0255">Endonuclease</keyword>
<keyword id="KW-0378">Hydrolase</keyword>
<keyword id="KW-0464">Manganese</keyword>
<keyword id="KW-0479">Metal-binding</keyword>
<keyword id="KW-0540">Nuclease</keyword>
<feature type="chain" id="PRO_1000031205" description="Ribonuclease HII">
    <location>
        <begin position="1"/>
        <end position="209"/>
    </location>
</feature>
<feature type="domain" description="RNase H type-2" evidence="2">
    <location>
        <begin position="18"/>
        <end position="209"/>
    </location>
</feature>
<feature type="binding site" evidence="1">
    <location>
        <position position="24"/>
    </location>
    <ligand>
        <name>a divalent metal cation</name>
        <dbReference type="ChEBI" id="CHEBI:60240"/>
    </ligand>
</feature>
<feature type="binding site" evidence="1">
    <location>
        <position position="25"/>
    </location>
    <ligand>
        <name>a divalent metal cation</name>
        <dbReference type="ChEBI" id="CHEBI:60240"/>
    </ligand>
</feature>
<feature type="binding site" evidence="1">
    <location>
        <position position="116"/>
    </location>
    <ligand>
        <name>a divalent metal cation</name>
        <dbReference type="ChEBI" id="CHEBI:60240"/>
    </ligand>
</feature>